<keyword id="KW-0961">Cell wall biogenesis/degradation</keyword>
<keyword id="KW-0963">Cytoplasm</keyword>
<keyword id="KW-0596">Phosphopantetheine</keyword>
<keyword id="KW-0597">Phosphoprotein</keyword>
<feature type="chain" id="PRO_1000024925" description="D-alanyl carrier protein">
    <location>
        <begin position="1"/>
        <end position="78"/>
    </location>
</feature>
<feature type="domain" description="Carrier" evidence="1">
    <location>
        <begin position="1"/>
        <end position="78"/>
    </location>
</feature>
<feature type="modified residue" description="O-(pantetheine 4'-phosphoryl)serine" evidence="1">
    <location>
        <position position="36"/>
    </location>
</feature>
<reference key="1">
    <citation type="journal article" date="2007" name="PLoS ONE">
        <title>Molecular correlates of host specialization in Staphylococcus aureus.</title>
        <authorList>
            <person name="Herron-Olson L."/>
            <person name="Fitzgerald J.R."/>
            <person name="Musser J.M."/>
            <person name="Kapur V."/>
        </authorList>
    </citation>
    <scope>NUCLEOTIDE SEQUENCE [LARGE SCALE GENOMIC DNA]</scope>
    <source>
        <strain>bovine RF122 / ET3-1</strain>
    </source>
</reference>
<accession>Q2YWQ6</accession>
<comment type="function">
    <text evidence="1">Carrier protein involved in the D-alanylation of lipoteichoic acid (LTA). The loading of thioester-linked D-alanine onto DltC is catalyzed by D-alanine--D-alanyl carrier protein ligase DltA. The DltC-carried D-alanyl group is further transferred to cell membrane phosphatidylglycerol (PG) by forming an ester bond, probably catalyzed by DltD. D-alanylation of LTA plays an important role in modulating the properties of the cell wall in Gram-positive bacteria, influencing the net charge of the cell wall.</text>
</comment>
<comment type="pathway">
    <text evidence="1">Cell wall biogenesis; lipoteichoic acid biosynthesis.</text>
</comment>
<comment type="subcellular location">
    <subcellularLocation>
        <location evidence="1">Cytoplasm</location>
    </subcellularLocation>
</comment>
<comment type="PTM">
    <text evidence="1">4'-phosphopantetheine is transferred from CoA to a specific serine of apo-DCP.</text>
</comment>
<comment type="similarity">
    <text evidence="1">Belongs to the DltC family.</text>
</comment>
<protein>
    <recommendedName>
        <fullName evidence="1">D-alanyl carrier protein</fullName>
        <shortName evidence="1">DCP</shortName>
    </recommendedName>
    <alternativeName>
        <fullName evidence="1">D-alanine--poly(phosphoribitol) ligase subunit 2</fullName>
    </alternativeName>
</protein>
<gene>
    <name evidence="1" type="primary">dltC</name>
    <name type="ordered locus">SAB0800</name>
</gene>
<evidence type="ECO:0000255" key="1">
    <source>
        <dbReference type="HAMAP-Rule" id="MF_00565"/>
    </source>
</evidence>
<sequence length="78" mass="9063">MEFREQVLNLLAEVAENDIVKENPDVEIFEEGIIDSFQTVGLLLEIQNKLDIEVSIMDFDRDEWATPNKIVEALEELR</sequence>
<name>DLTC_STAAB</name>
<proteinExistence type="inferred from homology"/>
<organism>
    <name type="scientific">Staphylococcus aureus (strain bovine RF122 / ET3-1)</name>
    <dbReference type="NCBI Taxonomy" id="273036"/>
    <lineage>
        <taxon>Bacteria</taxon>
        <taxon>Bacillati</taxon>
        <taxon>Bacillota</taxon>
        <taxon>Bacilli</taxon>
        <taxon>Bacillales</taxon>
        <taxon>Staphylococcaceae</taxon>
        <taxon>Staphylococcus</taxon>
    </lineage>
</organism>
<dbReference type="EMBL" id="AJ938182">
    <property type="protein sequence ID" value="CAI80488.1"/>
    <property type="molecule type" value="Genomic_DNA"/>
</dbReference>
<dbReference type="RefSeq" id="WP_000395692.1">
    <property type="nucleotide sequence ID" value="NC_007622.1"/>
</dbReference>
<dbReference type="SMR" id="Q2YWQ6"/>
<dbReference type="GeneID" id="98345253"/>
<dbReference type="KEGG" id="sab:SAB0800"/>
<dbReference type="HOGENOM" id="CLU_108696_19_0_9"/>
<dbReference type="UniPathway" id="UPA00556"/>
<dbReference type="GO" id="GO:0005737">
    <property type="term" value="C:cytoplasm"/>
    <property type="evidence" value="ECO:0007669"/>
    <property type="project" value="UniProtKB-SubCell"/>
</dbReference>
<dbReference type="GO" id="GO:0036370">
    <property type="term" value="F:D-alanyl carrier activity"/>
    <property type="evidence" value="ECO:0007669"/>
    <property type="project" value="UniProtKB-UniRule"/>
</dbReference>
<dbReference type="GO" id="GO:0071555">
    <property type="term" value="P:cell wall organization"/>
    <property type="evidence" value="ECO:0007669"/>
    <property type="project" value="UniProtKB-KW"/>
</dbReference>
<dbReference type="GO" id="GO:0070395">
    <property type="term" value="P:lipoteichoic acid biosynthetic process"/>
    <property type="evidence" value="ECO:0007669"/>
    <property type="project" value="UniProtKB-UniRule"/>
</dbReference>
<dbReference type="Gene3D" id="1.10.1200.10">
    <property type="entry name" value="ACP-like"/>
    <property type="match status" value="1"/>
</dbReference>
<dbReference type="HAMAP" id="MF_00565">
    <property type="entry name" value="DltC"/>
    <property type="match status" value="1"/>
</dbReference>
<dbReference type="InterPro" id="IPR036736">
    <property type="entry name" value="ACP-like_sf"/>
</dbReference>
<dbReference type="InterPro" id="IPR003230">
    <property type="entry name" value="DltC"/>
</dbReference>
<dbReference type="InterPro" id="IPR009081">
    <property type="entry name" value="PP-bd_ACP"/>
</dbReference>
<dbReference type="NCBIfam" id="TIGR01688">
    <property type="entry name" value="dltC"/>
    <property type="match status" value="1"/>
</dbReference>
<dbReference type="NCBIfam" id="NF003464">
    <property type="entry name" value="PRK05087.1"/>
    <property type="match status" value="1"/>
</dbReference>
<dbReference type="Pfam" id="PF00550">
    <property type="entry name" value="PP-binding"/>
    <property type="match status" value="1"/>
</dbReference>
<dbReference type="SUPFAM" id="SSF47336">
    <property type="entry name" value="ACP-like"/>
    <property type="match status" value="1"/>
</dbReference>
<dbReference type="PROSITE" id="PS50075">
    <property type="entry name" value="CARRIER"/>
    <property type="match status" value="1"/>
</dbReference>